<protein>
    <recommendedName>
        <fullName evidence="1">Lipoprotein signal peptidase</fullName>
        <ecNumber evidence="1">3.4.23.36</ecNumber>
    </recommendedName>
    <alternativeName>
        <fullName evidence="1">Prolipoprotein signal peptidase</fullName>
    </alternativeName>
    <alternativeName>
        <fullName evidence="1">Signal peptidase II</fullName>
        <shortName evidence="1">SPase II</shortName>
    </alternativeName>
</protein>
<proteinExistence type="inferred from homology"/>
<accession>A1S426</accession>
<feature type="chain" id="PRO_1000038821" description="Lipoprotein signal peptidase">
    <location>
        <begin position="1"/>
        <end position="168"/>
    </location>
</feature>
<feature type="transmembrane region" description="Helical" evidence="1">
    <location>
        <begin position="12"/>
        <end position="32"/>
    </location>
</feature>
<feature type="transmembrane region" description="Helical" evidence="1">
    <location>
        <begin position="67"/>
        <end position="87"/>
    </location>
</feature>
<feature type="transmembrane region" description="Helical" evidence="1">
    <location>
        <begin position="93"/>
        <end position="113"/>
    </location>
</feature>
<feature type="transmembrane region" description="Helical" evidence="1">
    <location>
        <begin position="136"/>
        <end position="156"/>
    </location>
</feature>
<feature type="active site" evidence="1">
    <location>
        <position position="123"/>
    </location>
</feature>
<feature type="active site" evidence="1">
    <location>
        <position position="141"/>
    </location>
</feature>
<gene>
    <name evidence="1" type="primary">lspA</name>
    <name type="ordered locus">Sama_0925</name>
</gene>
<organism>
    <name type="scientific">Shewanella amazonensis (strain ATCC BAA-1098 / SB2B)</name>
    <dbReference type="NCBI Taxonomy" id="326297"/>
    <lineage>
        <taxon>Bacteria</taxon>
        <taxon>Pseudomonadati</taxon>
        <taxon>Pseudomonadota</taxon>
        <taxon>Gammaproteobacteria</taxon>
        <taxon>Alteromonadales</taxon>
        <taxon>Shewanellaceae</taxon>
        <taxon>Shewanella</taxon>
    </lineage>
</organism>
<comment type="function">
    <text evidence="1">This protein specifically catalyzes the removal of signal peptides from prolipoproteins.</text>
</comment>
<comment type="catalytic activity">
    <reaction evidence="1">
        <text>Release of signal peptides from bacterial membrane prolipoproteins. Hydrolyzes -Xaa-Yaa-Zaa-|-(S,diacylglyceryl)Cys-, in which Xaa is hydrophobic (preferably Leu), and Yaa (Ala or Ser) and Zaa (Gly or Ala) have small, neutral side chains.</text>
        <dbReference type="EC" id="3.4.23.36"/>
    </reaction>
</comment>
<comment type="pathway">
    <text evidence="1">Protein modification; lipoprotein biosynthesis (signal peptide cleavage).</text>
</comment>
<comment type="subcellular location">
    <subcellularLocation>
        <location evidence="1">Cell inner membrane</location>
        <topology evidence="1">Multi-pass membrane protein</topology>
    </subcellularLocation>
</comment>
<comment type="similarity">
    <text evidence="1">Belongs to the peptidase A8 family.</text>
</comment>
<dbReference type="EC" id="3.4.23.36" evidence="1"/>
<dbReference type="EMBL" id="CP000507">
    <property type="protein sequence ID" value="ABL99132.1"/>
    <property type="molecule type" value="Genomic_DNA"/>
</dbReference>
<dbReference type="RefSeq" id="WP_011759041.1">
    <property type="nucleotide sequence ID" value="NC_008700.1"/>
</dbReference>
<dbReference type="SMR" id="A1S426"/>
<dbReference type="STRING" id="326297.Sama_0925"/>
<dbReference type="MEROPS" id="A08.001"/>
<dbReference type="KEGG" id="saz:Sama_0925"/>
<dbReference type="eggNOG" id="COG0597">
    <property type="taxonomic scope" value="Bacteria"/>
</dbReference>
<dbReference type="HOGENOM" id="CLU_083252_4_0_6"/>
<dbReference type="OrthoDB" id="9810259at2"/>
<dbReference type="UniPathway" id="UPA00665"/>
<dbReference type="Proteomes" id="UP000009175">
    <property type="component" value="Chromosome"/>
</dbReference>
<dbReference type="GO" id="GO:0005886">
    <property type="term" value="C:plasma membrane"/>
    <property type="evidence" value="ECO:0007669"/>
    <property type="project" value="UniProtKB-SubCell"/>
</dbReference>
<dbReference type="GO" id="GO:0004190">
    <property type="term" value="F:aspartic-type endopeptidase activity"/>
    <property type="evidence" value="ECO:0007669"/>
    <property type="project" value="UniProtKB-UniRule"/>
</dbReference>
<dbReference type="GO" id="GO:0006508">
    <property type="term" value="P:proteolysis"/>
    <property type="evidence" value="ECO:0007669"/>
    <property type="project" value="UniProtKB-KW"/>
</dbReference>
<dbReference type="HAMAP" id="MF_00161">
    <property type="entry name" value="LspA"/>
    <property type="match status" value="1"/>
</dbReference>
<dbReference type="InterPro" id="IPR001872">
    <property type="entry name" value="Peptidase_A8"/>
</dbReference>
<dbReference type="NCBIfam" id="TIGR00077">
    <property type="entry name" value="lspA"/>
    <property type="match status" value="1"/>
</dbReference>
<dbReference type="PANTHER" id="PTHR33695">
    <property type="entry name" value="LIPOPROTEIN SIGNAL PEPTIDASE"/>
    <property type="match status" value="1"/>
</dbReference>
<dbReference type="PANTHER" id="PTHR33695:SF1">
    <property type="entry name" value="LIPOPROTEIN SIGNAL PEPTIDASE"/>
    <property type="match status" value="1"/>
</dbReference>
<dbReference type="Pfam" id="PF01252">
    <property type="entry name" value="Peptidase_A8"/>
    <property type="match status" value="1"/>
</dbReference>
<dbReference type="PRINTS" id="PR00781">
    <property type="entry name" value="LIPOSIGPTASE"/>
</dbReference>
<dbReference type="PROSITE" id="PS00855">
    <property type="entry name" value="SPASE_II"/>
    <property type="match status" value="1"/>
</dbReference>
<reference key="1">
    <citation type="submission" date="2006-12" db="EMBL/GenBank/DDBJ databases">
        <title>Complete sequence of Shewanella amazonensis SB2B.</title>
        <authorList>
            <consortium name="US DOE Joint Genome Institute"/>
            <person name="Copeland A."/>
            <person name="Lucas S."/>
            <person name="Lapidus A."/>
            <person name="Barry K."/>
            <person name="Detter J.C."/>
            <person name="Glavina del Rio T."/>
            <person name="Hammon N."/>
            <person name="Israni S."/>
            <person name="Dalin E."/>
            <person name="Tice H."/>
            <person name="Pitluck S."/>
            <person name="Munk A.C."/>
            <person name="Brettin T."/>
            <person name="Bruce D."/>
            <person name="Han C."/>
            <person name="Tapia R."/>
            <person name="Gilna P."/>
            <person name="Schmutz J."/>
            <person name="Larimer F."/>
            <person name="Land M."/>
            <person name="Hauser L."/>
            <person name="Kyrpides N."/>
            <person name="Mikhailova N."/>
            <person name="Fredrickson J."/>
            <person name="Richardson P."/>
        </authorList>
    </citation>
    <scope>NUCLEOTIDE SEQUENCE [LARGE SCALE GENOMIC DNA]</scope>
    <source>
        <strain>ATCC BAA-1098 / SB2B</strain>
    </source>
</reference>
<sequence length="168" mass="19224">MQLNWKESGLRWYWVVVVVFLADQLSKQWVLANFDLYESVKLLPFFNFTYVRNYGAAFSFLHDAGGWQRWLFTAVAVGFSVLLTIWLRKQPANMVRLNLAYTLVIGGALGNLIDRLQHGFVVDFLDFYWNTAHYPAFNIADAAIFIGAVLIIIDSFKASSSDDKAIKE</sequence>
<name>LSPA_SHEAM</name>
<keyword id="KW-0064">Aspartyl protease</keyword>
<keyword id="KW-0997">Cell inner membrane</keyword>
<keyword id="KW-1003">Cell membrane</keyword>
<keyword id="KW-0378">Hydrolase</keyword>
<keyword id="KW-0472">Membrane</keyword>
<keyword id="KW-0645">Protease</keyword>
<keyword id="KW-1185">Reference proteome</keyword>
<keyword id="KW-0812">Transmembrane</keyword>
<keyword id="KW-1133">Transmembrane helix</keyword>
<evidence type="ECO:0000255" key="1">
    <source>
        <dbReference type="HAMAP-Rule" id="MF_00161"/>
    </source>
</evidence>